<keyword id="KW-0066">ATP synthesis</keyword>
<keyword id="KW-0997">Cell inner membrane</keyword>
<keyword id="KW-1003">Cell membrane</keyword>
<keyword id="KW-0139">CF(1)</keyword>
<keyword id="KW-0375">Hydrogen ion transport</keyword>
<keyword id="KW-0406">Ion transport</keyword>
<keyword id="KW-0472">Membrane</keyword>
<keyword id="KW-1185">Reference proteome</keyword>
<keyword id="KW-0813">Transport</keyword>
<evidence type="ECO:0000255" key="1">
    <source>
        <dbReference type="HAMAP-Rule" id="MF_00815"/>
    </source>
</evidence>
<proteinExistence type="inferred from homology"/>
<feature type="chain" id="PRO_0000073327" description="ATP synthase gamma chain">
    <location>
        <begin position="1"/>
        <end position="291"/>
    </location>
</feature>
<name>ATPG_NEIG1</name>
<reference key="1">
    <citation type="submission" date="2003-03" db="EMBL/GenBank/DDBJ databases">
        <title>The complete genome sequence of Neisseria gonorrhoeae.</title>
        <authorList>
            <person name="Lewis L.A."/>
            <person name="Gillaspy A.F."/>
            <person name="McLaughlin R.E."/>
            <person name="Gipson M."/>
            <person name="Ducey T.F."/>
            <person name="Ownbey T."/>
            <person name="Hartman K."/>
            <person name="Nydick C."/>
            <person name="Carson M.B."/>
            <person name="Vaughn J."/>
            <person name="Thomson C."/>
            <person name="Song L."/>
            <person name="Lin S."/>
            <person name="Yuan X."/>
            <person name="Najar F."/>
            <person name="Zhan M."/>
            <person name="Ren Q."/>
            <person name="Zhu H."/>
            <person name="Qi S."/>
            <person name="Kenton S.M."/>
            <person name="Lai H."/>
            <person name="White J.D."/>
            <person name="Clifton S."/>
            <person name="Roe B.A."/>
            <person name="Dyer D.W."/>
        </authorList>
    </citation>
    <scope>NUCLEOTIDE SEQUENCE [LARGE SCALE GENOMIC DNA]</scope>
    <source>
        <strain>ATCC 700825 / FA 1090</strain>
    </source>
</reference>
<accession>Q5F4Z1</accession>
<gene>
    <name evidence="1" type="primary">atpG</name>
    <name type="ordered locus">NGO_2149</name>
</gene>
<comment type="function">
    <text evidence="1">Produces ATP from ADP in the presence of a proton gradient across the membrane. The gamma chain is believed to be important in regulating ATPase activity and the flow of protons through the CF(0) complex.</text>
</comment>
<comment type="subunit">
    <text evidence="1">F-type ATPases have 2 components, CF(1) - the catalytic core - and CF(0) - the membrane proton channel. CF(1) has five subunits: alpha(3), beta(3), gamma(1), delta(1), epsilon(1). CF(0) has three main subunits: a, b and c.</text>
</comment>
<comment type="subcellular location">
    <subcellularLocation>
        <location evidence="1">Cell inner membrane</location>
        <topology evidence="1">Peripheral membrane protein</topology>
    </subcellularLocation>
</comment>
<comment type="similarity">
    <text evidence="1">Belongs to the ATPase gamma chain family.</text>
</comment>
<protein>
    <recommendedName>
        <fullName evidence="1">ATP synthase gamma chain</fullName>
    </recommendedName>
    <alternativeName>
        <fullName evidence="1">ATP synthase F1 sector gamma subunit</fullName>
    </alternativeName>
    <alternativeName>
        <fullName evidence="1">F-ATPase gamma subunit</fullName>
    </alternativeName>
</protein>
<organism>
    <name type="scientific">Neisseria gonorrhoeae (strain ATCC 700825 / FA 1090)</name>
    <dbReference type="NCBI Taxonomy" id="242231"/>
    <lineage>
        <taxon>Bacteria</taxon>
        <taxon>Pseudomonadati</taxon>
        <taxon>Pseudomonadota</taxon>
        <taxon>Betaproteobacteria</taxon>
        <taxon>Neisseriales</taxon>
        <taxon>Neisseriaceae</taxon>
        <taxon>Neisseria</taxon>
    </lineage>
</organism>
<sequence length="291" mass="32453">MAVGKEILTKIRSVQNTQKITKAMQMVSTSKMRKTQERMSLARPYAEKVRMVMSHLAQTNTDHGIPLLESHREIRRVGFILITSDKGLCGGLNANVLKKFLAQVQEYRNQGIEEEIVCLGSKGLMACQSIGLNVVASAVNLGDTPKMEMLLGPLTELFQRYEKHEIDRIHLVYSGFVNTMRQEPRMEVLLPIGENVIGDSAPKSPFSWEYRYEPTALAVLEYLVRRYLESVVYQALSDNMASEQAARMVAMKAATDNAGNAIKELRLVYNKSRQAAITTELSEIVAGAAAV</sequence>
<dbReference type="EMBL" id="AE004969">
    <property type="protein sequence ID" value="AAW90746.1"/>
    <property type="molecule type" value="Genomic_DNA"/>
</dbReference>
<dbReference type="RefSeq" id="WP_003705028.1">
    <property type="nucleotide sequence ID" value="NC_002946.2"/>
</dbReference>
<dbReference type="RefSeq" id="YP_209158.1">
    <property type="nucleotide sequence ID" value="NC_002946.2"/>
</dbReference>
<dbReference type="SMR" id="Q5F4Z1"/>
<dbReference type="STRING" id="242231.NGO_2149"/>
<dbReference type="KEGG" id="ngo:NGO_2149"/>
<dbReference type="PATRIC" id="fig|242231.10.peg.2598"/>
<dbReference type="HOGENOM" id="CLU_050669_0_1_4"/>
<dbReference type="Proteomes" id="UP000000535">
    <property type="component" value="Chromosome"/>
</dbReference>
<dbReference type="GO" id="GO:0005886">
    <property type="term" value="C:plasma membrane"/>
    <property type="evidence" value="ECO:0007669"/>
    <property type="project" value="UniProtKB-SubCell"/>
</dbReference>
<dbReference type="GO" id="GO:0045259">
    <property type="term" value="C:proton-transporting ATP synthase complex"/>
    <property type="evidence" value="ECO:0007669"/>
    <property type="project" value="UniProtKB-KW"/>
</dbReference>
<dbReference type="GO" id="GO:0005524">
    <property type="term" value="F:ATP binding"/>
    <property type="evidence" value="ECO:0007669"/>
    <property type="project" value="UniProtKB-UniRule"/>
</dbReference>
<dbReference type="GO" id="GO:0046933">
    <property type="term" value="F:proton-transporting ATP synthase activity, rotational mechanism"/>
    <property type="evidence" value="ECO:0007669"/>
    <property type="project" value="UniProtKB-UniRule"/>
</dbReference>
<dbReference type="GO" id="GO:0042777">
    <property type="term" value="P:proton motive force-driven plasma membrane ATP synthesis"/>
    <property type="evidence" value="ECO:0007669"/>
    <property type="project" value="UniProtKB-UniRule"/>
</dbReference>
<dbReference type="CDD" id="cd12151">
    <property type="entry name" value="F1-ATPase_gamma"/>
    <property type="match status" value="1"/>
</dbReference>
<dbReference type="FunFam" id="1.10.287.80:FF:000005">
    <property type="entry name" value="ATP synthase gamma chain"/>
    <property type="match status" value="1"/>
</dbReference>
<dbReference type="Gene3D" id="3.40.1380.10">
    <property type="match status" value="1"/>
</dbReference>
<dbReference type="Gene3D" id="1.10.287.80">
    <property type="entry name" value="ATP synthase, gamma subunit, helix hairpin domain"/>
    <property type="match status" value="1"/>
</dbReference>
<dbReference type="HAMAP" id="MF_00815">
    <property type="entry name" value="ATP_synth_gamma_bact"/>
    <property type="match status" value="1"/>
</dbReference>
<dbReference type="InterPro" id="IPR035968">
    <property type="entry name" value="ATP_synth_F1_ATPase_gsu"/>
</dbReference>
<dbReference type="InterPro" id="IPR000131">
    <property type="entry name" value="ATP_synth_F1_gsu"/>
</dbReference>
<dbReference type="InterPro" id="IPR023632">
    <property type="entry name" value="ATP_synth_F1_gsu_CS"/>
</dbReference>
<dbReference type="NCBIfam" id="TIGR01146">
    <property type="entry name" value="ATPsyn_F1gamma"/>
    <property type="match status" value="1"/>
</dbReference>
<dbReference type="NCBIfam" id="NF004144">
    <property type="entry name" value="PRK05621.1-1"/>
    <property type="match status" value="1"/>
</dbReference>
<dbReference type="PANTHER" id="PTHR11693">
    <property type="entry name" value="ATP SYNTHASE GAMMA CHAIN"/>
    <property type="match status" value="1"/>
</dbReference>
<dbReference type="PANTHER" id="PTHR11693:SF22">
    <property type="entry name" value="ATP SYNTHASE SUBUNIT GAMMA, MITOCHONDRIAL"/>
    <property type="match status" value="1"/>
</dbReference>
<dbReference type="Pfam" id="PF00231">
    <property type="entry name" value="ATP-synt"/>
    <property type="match status" value="1"/>
</dbReference>
<dbReference type="PRINTS" id="PR00126">
    <property type="entry name" value="ATPASEGAMMA"/>
</dbReference>
<dbReference type="SUPFAM" id="SSF52943">
    <property type="entry name" value="ATP synthase (F1-ATPase), gamma subunit"/>
    <property type="match status" value="1"/>
</dbReference>
<dbReference type="PROSITE" id="PS00153">
    <property type="entry name" value="ATPASE_GAMMA"/>
    <property type="match status" value="1"/>
</dbReference>